<gene>
    <name evidence="1" type="primary">rpsU</name>
    <name evidence="1" type="synonym">rps21</name>
    <name type="ordered locus">NATL1_19351</name>
</gene>
<keyword id="KW-0687">Ribonucleoprotein</keyword>
<keyword id="KW-0689">Ribosomal protein</keyword>
<proteinExistence type="inferred from homology"/>
<feature type="chain" id="PRO_1000005150" description="Small ribosomal subunit protein bS21">
    <location>
        <begin position="1"/>
        <end position="58"/>
    </location>
</feature>
<feature type="region of interest" description="Disordered" evidence="2">
    <location>
        <begin position="36"/>
        <end position="58"/>
    </location>
</feature>
<feature type="compositionally biased region" description="Basic residues" evidence="2">
    <location>
        <begin position="45"/>
        <end position="58"/>
    </location>
</feature>
<evidence type="ECO:0000255" key="1">
    <source>
        <dbReference type="HAMAP-Rule" id="MF_00358"/>
    </source>
</evidence>
<evidence type="ECO:0000256" key="2">
    <source>
        <dbReference type="SAM" id="MobiDB-lite"/>
    </source>
</evidence>
<evidence type="ECO:0000305" key="3"/>
<reference key="1">
    <citation type="journal article" date="2007" name="PLoS Genet.">
        <title>Patterns and implications of gene gain and loss in the evolution of Prochlorococcus.</title>
        <authorList>
            <person name="Kettler G.C."/>
            <person name="Martiny A.C."/>
            <person name="Huang K."/>
            <person name="Zucker J."/>
            <person name="Coleman M.L."/>
            <person name="Rodrigue S."/>
            <person name="Chen F."/>
            <person name="Lapidus A."/>
            <person name="Ferriera S."/>
            <person name="Johnson J."/>
            <person name="Steglich C."/>
            <person name="Church G.M."/>
            <person name="Richardson P."/>
            <person name="Chisholm S.W."/>
        </authorList>
    </citation>
    <scope>NUCLEOTIDE SEQUENCE [LARGE SCALE GENOMIC DNA]</scope>
    <source>
        <strain>NATL1A</strain>
    </source>
</reference>
<protein>
    <recommendedName>
        <fullName evidence="1">Small ribosomal subunit protein bS21</fullName>
    </recommendedName>
    <alternativeName>
        <fullName evidence="3">30S ribosomal protein S21</fullName>
    </alternativeName>
</protein>
<accession>A2C4T1</accession>
<name>RS21_PROM1</name>
<dbReference type="EMBL" id="CP000553">
    <property type="protein sequence ID" value="ABM76491.1"/>
    <property type="molecule type" value="Genomic_DNA"/>
</dbReference>
<dbReference type="RefSeq" id="WP_011295405.1">
    <property type="nucleotide sequence ID" value="NC_008819.1"/>
</dbReference>
<dbReference type="SMR" id="A2C4T1"/>
<dbReference type="KEGG" id="pme:NATL1_19351"/>
<dbReference type="eggNOG" id="COG0828">
    <property type="taxonomic scope" value="Bacteria"/>
</dbReference>
<dbReference type="HOGENOM" id="CLU_159258_3_1_3"/>
<dbReference type="Proteomes" id="UP000002592">
    <property type="component" value="Chromosome"/>
</dbReference>
<dbReference type="GO" id="GO:1990904">
    <property type="term" value="C:ribonucleoprotein complex"/>
    <property type="evidence" value="ECO:0007669"/>
    <property type="project" value="UniProtKB-KW"/>
</dbReference>
<dbReference type="GO" id="GO:0005840">
    <property type="term" value="C:ribosome"/>
    <property type="evidence" value="ECO:0007669"/>
    <property type="project" value="UniProtKB-KW"/>
</dbReference>
<dbReference type="GO" id="GO:0003735">
    <property type="term" value="F:structural constituent of ribosome"/>
    <property type="evidence" value="ECO:0007669"/>
    <property type="project" value="InterPro"/>
</dbReference>
<dbReference type="GO" id="GO:0006412">
    <property type="term" value="P:translation"/>
    <property type="evidence" value="ECO:0007669"/>
    <property type="project" value="UniProtKB-UniRule"/>
</dbReference>
<dbReference type="Gene3D" id="1.20.5.1150">
    <property type="entry name" value="Ribosomal protein S8"/>
    <property type="match status" value="1"/>
</dbReference>
<dbReference type="HAMAP" id="MF_00358">
    <property type="entry name" value="Ribosomal_bS21"/>
    <property type="match status" value="1"/>
</dbReference>
<dbReference type="InterPro" id="IPR001911">
    <property type="entry name" value="Ribosomal_bS21"/>
</dbReference>
<dbReference type="InterPro" id="IPR018278">
    <property type="entry name" value="Ribosomal_bS21_CS"/>
</dbReference>
<dbReference type="InterPro" id="IPR038380">
    <property type="entry name" value="Ribosomal_bS21_sf"/>
</dbReference>
<dbReference type="NCBIfam" id="TIGR00030">
    <property type="entry name" value="S21p"/>
    <property type="match status" value="1"/>
</dbReference>
<dbReference type="PANTHER" id="PTHR21109">
    <property type="entry name" value="MITOCHONDRIAL 28S RIBOSOMAL PROTEIN S21"/>
    <property type="match status" value="1"/>
</dbReference>
<dbReference type="PANTHER" id="PTHR21109:SF0">
    <property type="entry name" value="SMALL RIBOSOMAL SUBUNIT PROTEIN BS21M"/>
    <property type="match status" value="1"/>
</dbReference>
<dbReference type="Pfam" id="PF01165">
    <property type="entry name" value="Ribosomal_S21"/>
    <property type="match status" value="1"/>
</dbReference>
<dbReference type="PRINTS" id="PR00976">
    <property type="entry name" value="RIBOSOMALS21"/>
</dbReference>
<dbReference type="PROSITE" id="PS01181">
    <property type="entry name" value="RIBOSOMAL_S21"/>
    <property type="match status" value="1"/>
</dbReference>
<comment type="similarity">
    <text evidence="1">Belongs to the bacterial ribosomal protein bS21 family.</text>
</comment>
<organism>
    <name type="scientific">Prochlorococcus marinus (strain NATL1A)</name>
    <dbReference type="NCBI Taxonomy" id="167555"/>
    <lineage>
        <taxon>Bacteria</taxon>
        <taxon>Bacillati</taxon>
        <taxon>Cyanobacteriota</taxon>
        <taxon>Cyanophyceae</taxon>
        <taxon>Synechococcales</taxon>
        <taxon>Prochlorococcaceae</taxon>
        <taxon>Prochlorococcus</taxon>
    </lineage>
</organism>
<sequence length="58" mass="7033">MTQVTVGENEGIESALRRFKRQVSKAGIFGELKRLRHHETPVEKYKRKLQQRRRSRRR</sequence>